<dbReference type="EMBL" id="CP000505">
    <property type="protein sequence ID" value="ABL78890.1"/>
    <property type="molecule type" value="Genomic_DNA"/>
</dbReference>
<dbReference type="RefSeq" id="WP_011753155.1">
    <property type="nucleotide sequence ID" value="NC_008698.1"/>
</dbReference>
<dbReference type="SMR" id="A1S0B0"/>
<dbReference type="EnsemblBacteria" id="ABL78890">
    <property type="protein sequence ID" value="ABL78890"/>
    <property type="gene ID" value="Tpen_1493"/>
</dbReference>
<dbReference type="GeneID" id="4601402"/>
<dbReference type="KEGG" id="tpe:Tpen_1493"/>
<dbReference type="eggNOG" id="arCOG00497">
    <property type="taxonomic scope" value="Archaea"/>
</dbReference>
<dbReference type="HOGENOM" id="CLU_070010_4_0_2"/>
<dbReference type="OrthoDB" id="28313at2157"/>
<dbReference type="Proteomes" id="UP000000641">
    <property type="component" value="Chromosome"/>
</dbReference>
<dbReference type="GO" id="GO:0016787">
    <property type="term" value="F:hydrolase activity"/>
    <property type="evidence" value="ECO:0007669"/>
    <property type="project" value="UniProtKB-UniRule"/>
</dbReference>
<dbReference type="Gene3D" id="3.60.15.10">
    <property type="entry name" value="Ribonuclease Z/Hydroxyacylglutathione hydrolase-like"/>
    <property type="match status" value="1"/>
</dbReference>
<dbReference type="HAMAP" id="MF_00457">
    <property type="entry name" value="UPF0173"/>
    <property type="match status" value="1"/>
</dbReference>
<dbReference type="InterPro" id="IPR001279">
    <property type="entry name" value="Metallo-B-lactamas"/>
</dbReference>
<dbReference type="InterPro" id="IPR036866">
    <property type="entry name" value="RibonucZ/Hydroxyglut_hydro"/>
</dbReference>
<dbReference type="InterPro" id="IPR022877">
    <property type="entry name" value="UPF0173"/>
</dbReference>
<dbReference type="InterPro" id="IPR050114">
    <property type="entry name" value="UPF0173_UPF0282_UlaG_hydrolase"/>
</dbReference>
<dbReference type="NCBIfam" id="NF001911">
    <property type="entry name" value="PRK00685.1"/>
    <property type="match status" value="1"/>
</dbReference>
<dbReference type="PANTHER" id="PTHR43546:SF3">
    <property type="entry name" value="UPF0173 METAL-DEPENDENT HYDROLASE MJ1163"/>
    <property type="match status" value="1"/>
</dbReference>
<dbReference type="PANTHER" id="PTHR43546">
    <property type="entry name" value="UPF0173 METAL-DEPENDENT HYDROLASE MJ1163-RELATED"/>
    <property type="match status" value="1"/>
</dbReference>
<dbReference type="Pfam" id="PF12706">
    <property type="entry name" value="Lactamase_B_2"/>
    <property type="match status" value="1"/>
</dbReference>
<dbReference type="SMART" id="SM00849">
    <property type="entry name" value="Lactamase_B"/>
    <property type="match status" value="1"/>
</dbReference>
<dbReference type="SUPFAM" id="SSF56281">
    <property type="entry name" value="Metallo-hydrolase/oxidoreductase"/>
    <property type="match status" value="1"/>
</dbReference>
<name>Y1493_THEPD</name>
<protein>
    <recommendedName>
        <fullName evidence="1">UPF0173 metal-dependent hydrolase Tpen_1493</fullName>
    </recommendedName>
</protein>
<organism>
    <name type="scientific">Thermofilum pendens (strain DSM 2475 / Hrk 5)</name>
    <dbReference type="NCBI Taxonomy" id="368408"/>
    <lineage>
        <taxon>Archaea</taxon>
        <taxon>Thermoproteota</taxon>
        <taxon>Thermoprotei</taxon>
        <taxon>Thermofilales</taxon>
        <taxon>Thermofilaceae</taxon>
        <taxon>Thermofilum</taxon>
    </lineage>
</organism>
<comment type="similarity">
    <text evidence="1">Belongs to the UPF0173 family.</text>
</comment>
<sequence>MARLRYLGHAAFDVELEGFDGRKRRILLDPWLENPLSPVKPSDYRGARVDYIFVTHDHGDHLGNAVELARATGAKVVAVYELAEELSKEGVQAVGANIGGPLALEGIQAVFTPALHSSSKGAPTGVVVRGRDTAVYHAGDTGLFGDMRLIGELYAPDVALLPIGGHFTMGVVEALKAVELLRPRLAIPMHYNTFPEIRADPEKFKELVEATTRTKVVVLKPGDYVEYP</sequence>
<feature type="chain" id="PRO_1000013516" description="UPF0173 metal-dependent hydrolase Tpen_1493">
    <location>
        <begin position="1"/>
        <end position="228"/>
    </location>
</feature>
<evidence type="ECO:0000255" key="1">
    <source>
        <dbReference type="HAMAP-Rule" id="MF_00457"/>
    </source>
</evidence>
<reference key="1">
    <citation type="journal article" date="2008" name="J. Bacteriol.">
        <title>Genome sequence of Thermofilum pendens reveals an exceptional loss of biosynthetic pathways without genome reduction.</title>
        <authorList>
            <person name="Anderson I."/>
            <person name="Rodriguez J."/>
            <person name="Susanti D."/>
            <person name="Porat I."/>
            <person name="Reich C."/>
            <person name="Ulrich L.E."/>
            <person name="Elkins J.G."/>
            <person name="Mavromatis K."/>
            <person name="Lykidis A."/>
            <person name="Kim E."/>
            <person name="Thompson L.S."/>
            <person name="Nolan M."/>
            <person name="Land M."/>
            <person name="Copeland A."/>
            <person name="Lapidus A."/>
            <person name="Lucas S."/>
            <person name="Detter C."/>
            <person name="Zhulin I.B."/>
            <person name="Olsen G.J."/>
            <person name="Whitman W."/>
            <person name="Mukhopadhyay B."/>
            <person name="Bristow J."/>
            <person name="Kyrpides N."/>
        </authorList>
    </citation>
    <scope>NUCLEOTIDE SEQUENCE [LARGE SCALE GENOMIC DNA]</scope>
    <source>
        <strain>DSM 2475 / Hrk 5</strain>
    </source>
</reference>
<accession>A1S0B0</accession>
<gene>
    <name type="ordered locus">Tpen_1493</name>
</gene>
<keyword id="KW-0378">Hydrolase</keyword>
<keyword id="KW-1185">Reference proteome</keyword>
<proteinExistence type="inferred from homology"/>